<comment type="function">
    <text evidence="2 6">Modulates viral and host transcriptional activity to promote viral genome replication. Stimulates viral E2a promoter activity by binding and inducing dimerization of host E2F. During viral infection E1A protein binds to cellular retinablastoma (RB) family members and dissociates these repressors from a complex with E2F proteins. Free E2F is then bound to E4orf6/7 which leads to transactivation of viral E2 promoter, and cellular promoters such as E2F-1 promoter. Activation of cellular E2F targets promote cell cycle S phase and thereby possibly favorises viral DNA replication process.</text>
</comment>
<comment type="subunit">
    <text evidence="4 5">Interacts with host E2F proteins.</text>
</comment>
<comment type="subcellular location">
    <subcellularLocation>
        <location evidence="3">Host nucleus</location>
    </subcellularLocation>
</comment>
<comment type="similarity">
    <text evidence="7">Belongs to the adenoviridae E4-orf6/7 family.</text>
</comment>
<accession>P03238</accession>
<proteinExistence type="evidence at protein level"/>
<keyword id="KW-0244">Early protein</keyword>
<keyword id="KW-1048">Host nucleus</keyword>
<keyword id="KW-1185">Reference proteome</keyword>
<keyword id="KW-0804">Transcription</keyword>
<keyword id="KW-0805">Transcription regulation</keyword>
<keyword id="KW-1195">Viral transcription</keyword>
<evidence type="ECO:0000256" key="1">
    <source>
        <dbReference type="SAM" id="MobiDB-lite"/>
    </source>
</evidence>
<evidence type="ECO:0000269" key="2">
    <source>
    </source>
</evidence>
<evidence type="ECO:0000269" key="3">
    <source>
    </source>
</evidence>
<evidence type="ECO:0000269" key="4">
    <source>
    </source>
</evidence>
<evidence type="ECO:0000269" key="5">
    <source>
    </source>
</evidence>
<evidence type="ECO:0000269" key="6">
    <source>
    </source>
</evidence>
<evidence type="ECO:0000305" key="7"/>
<feature type="chain" id="PRO_0000036489" description="Early 4 ORF6/7 control protein">
    <location>
        <begin position="1"/>
        <end position="150"/>
    </location>
</feature>
<feature type="region of interest" description="Disordered" evidence="1">
    <location>
        <begin position="1"/>
        <end position="31"/>
    </location>
</feature>
<feature type="short sequence motif" description="Nuclear localization signal">
    <location>
        <begin position="1"/>
        <end position="58"/>
    </location>
</feature>
<reference key="1">
    <citation type="journal article" date="1981" name="Nucleic Acids Res.">
        <title>Nucleotide sequence of adenovirus 2 DNA fragment encoding for the carboxylic region of the fiber protein and the entire E4 region.</title>
        <authorList>
            <person name="Herisse J."/>
            <person name="Rigolet M."/>
            <person name="Dupont de Dinechin S."/>
            <person name="Galibert F."/>
        </authorList>
    </citation>
    <scope>NUCLEOTIDE SEQUENCE [GENOMIC DNA]</scope>
</reference>
<reference key="2">
    <citation type="journal article" date="1989" name="Genes Dev.">
        <title>The adenovirus early region 4 open reading frame 6/7 protein regulates the DNA binding activity of the cellular transcription factor, E2F, through a direct complex.</title>
        <authorList>
            <person name="Huang M.M."/>
            <person name="Hearing P."/>
        </authorList>
    </citation>
    <scope>INTERACTION WITH HOST E2F</scope>
    <source>
        <strain>Human adenovirus C serotype 5</strain>
    </source>
</reference>
<reference key="3">
    <citation type="journal article" date="1991" name="J. Virol.">
        <title>Genetic analysis of the adenovirus E4 6/7 trans activator: interaction with E2F and induction of a stable DNA-protein complex are critical for activity.</title>
        <authorList>
            <person name="Neill S.D."/>
            <person name="Nevins J.R."/>
        </authorList>
    </citation>
    <scope>INTERACTION WITH HOST E2F</scope>
    <source>
        <strain>Human adenovirus C serotype 5</strain>
    </source>
</reference>
<reference key="4">
    <citation type="journal article" date="1994" name="Mol. Cell. Biol.">
        <title>The adenovirus E4-6/7 protein transactivates the E2 promoter by inducing dimerization of a heteromeric E2F complex.</title>
        <authorList>
            <person name="Obert S."/>
            <person name="O'Connor R.J."/>
            <person name="Schmid S."/>
            <person name="Hearing P."/>
        </authorList>
    </citation>
    <scope>FUNCTION</scope>
    <source>
        <strain>Human adenovirus C serotype 5</strain>
    </source>
</reference>
<reference key="5">
    <citation type="journal article" date="2000" name="J. Virol.">
        <title>Induction of the cellular E2F-1 promoter by the adenovirus E4-6/7 protein.</title>
        <authorList>
            <person name="Schaley J."/>
            <person name="O'Connor R.J."/>
            <person name="Taylor L.J."/>
            <person name="Bar-Sagi D."/>
            <person name="Hearing P."/>
        </authorList>
    </citation>
    <scope>FUNCTION</scope>
    <source>
        <strain>Human adenovirus C serotype 5</strain>
    </source>
</reference>
<reference key="6">
    <citation type="journal article" date="2005" name="J. Virol.">
        <title>The adenovirus E4-6/7 protein directs nuclear localization of E2F-4 via an arginine-rich motif.</title>
        <authorList>
            <person name="Schaley J.E."/>
            <person name="Polonskaia M."/>
            <person name="Hearing P."/>
        </authorList>
    </citation>
    <scope>SUBCELLULAR LOCATION</scope>
    <source>
        <strain>Human adenovirus C serotype 5</strain>
    </source>
</reference>
<reference key="7">
    <citation type="journal article" date="2005" name="Front. Biosci.">
        <title>Functions of the adenovirus E4 proteins and their impact on viral vectors.</title>
        <authorList>
            <person name="Weitzman M.D."/>
        </authorList>
    </citation>
    <scope>REVIEW</scope>
</reference>
<organism>
    <name type="scientific">Human adenovirus C serotype 2</name>
    <name type="common">HAdV-2</name>
    <name type="synonym">Human adenovirus 2</name>
    <dbReference type="NCBI Taxonomy" id="10515"/>
    <lineage>
        <taxon>Viruses</taxon>
        <taxon>Varidnaviria</taxon>
        <taxon>Bamfordvirae</taxon>
        <taxon>Preplasmiviricota</taxon>
        <taxon>Tectiliviricetes</taxon>
        <taxon>Rowavirales</taxon>
        <taxon>Adenoviridae</taxon>
        <taxon>Mastadenovirus</taxon>
        <taxon>Human mastadenovirus C</taxon>
    </lineage>
</organism>
<protein>
    <recommendedName>
        <fullName>Early 4 ORF6/7 control protein</fullName>
        <shortName>E4-ORF6/7</shortName>
    </recommendedName>
    <alternativeName>
        <fullName>Early E4 17 kDa protein</fullName>
    </alternativeName>
</protein>
<name>E4RF5_ADE02</name>
<dbReference type="EMBL" id="J01917">
    <property type="status" value="NOT_ANNOTATED_CDS"/>
    <property type="molecule type" value="Genomic_DNA"/>
</dbReference>
<dbReference type="PIR" id="A03804">
    <property type="entry name" value="Q4ADB2"/>
</dbReference>
<dbReference type="RefSeq" id="AP_000191.1">
    <property type="nucleotide sequence ID" value="AC_000007.1"/>
</dbReference>
<dbReference type="Proteomes" id="UP000008167">
    <property type="component" value="Segment"/>
</dbReference>
<dbReference type="GO" id="GO:0042025">
    <property type="term" value="C:host cell nucleus"/>
    <property type="evidence" value="ECO:0007669"/>
    <property type="project" value="UniProtKB-SubCell"/>
</dbReference>
<dbReference type="GO" id="GO:0019083">
    <property type="term" value="P:viral transcription"/>
    <property type="evidence" value="ECO:0007669"/>
    <property type="project" value="UniProtKB-KW"/>
</dbReference>
<organismHost>
    <name type="scientific">Homo sapiens</name>
    <name type="common">Human</name>
    <dbReference type="NCBI Taxonomy" id="9606"/>
</organismHost>
<sequence length="150" mass="17054">MTTSGVPFGMTLRPTRSRLSRRTPYSRDRLPPFETETRATILEDHPLLPECNTLTMHNAWTSPSPPVEQPQVGQQPVAQQLDSDMNLSELPGEFINITDERLARQETVWNITPKNMSVTHDMMLFKASRGERTVYSVCWEGGGRLNTRVL</sequence>